<keyword id="KW-0687">Ribonucleoprotein</keyword>
<keyword id="KW-0689">Ribosomal protein</keyword>
<keyword id="KW-0694">RNA-binding</keyword>
<keyword id="KW-0699">rRNA-binding</keyword>
<evidence type="ECO:0000255" key="1">
    <source>
        <dbReference type="HAMAP-Rule" id="MF_01363"/>
    </source>
</evidence>
<evidence type="ECO:0000305" key="2"/>
<sequence length="107" mass="12163">MEPYAVIQTGNKQYQVRKGDVIDVELLDGISEENKEVLFQDVLFTFDGEKASVGAPTVGNAVVKGELVSFVRGEKVVAYKYKKRKNYHKKIGHRQNYLRVKISDLVM</sequence>
<organism>
    <name type="scientific">Chlamydia trachomatis serovar L2 (strain ATCC VR-902B / DSM 19102 / 434/Bu)</name>
    <dbReference type="NCBI Taxonomy" id="471472"/>
    <lineage>
        <taxon>Bacteria</taxon>
        <taxon>Pseudomonadati</taxon>
        <taxon>Chlamydiota</taxon>
        <taxon>Chlamydiia</taxon>
        <taxon>Chlamydiales</taxon>
        <taxon>Chlamydiaceae</taxon>
        <taxon>Chlamydia/Chlamydophila group</taxon>
        <taxon>Chlamydia</taxon>
    </lineage>
</organism>
<feature type="chain" id="PRO_1000143770" description="Large ribosomal subunit protein bL21">
    <location>
        <begin position="1"/>
        <end position="107"/>
    </location>
</feature>
<reference key="1">
    <citation type="journal article" date="2008" name="Genome Res.">
        <title>Chlamydia trachomatis: genome sequence analysis of lymphogranuloma venereum isolates.</title>
        <authorList>
            <person name="Thomson N.R."/>
            <person name="Holden M.T.G."/>
            <person name="Carder C."/>
            <person name="Lennard N."/>
            <person name="Lockey S.J."/>
            <person name="Marsh P."/>
            <person name="Skipp P."/>
            <person name="O'Connor C.D."/>
            <person name="Goodhead I."/>
            <person name="Norbertzcak H."/>
            <person name="Harris B."/>
            <person name="Ormond D."/>
            <person name="Rance R."/>
            <person name="Quail M.A."/>
            <person name="Parkhill J."/>
            <person name="Stephens R.S."/>
            <person name="Clarke I.N."/>
        </authorList>
    </citation>
    <scope>NUCLEOTIDE SEQUENCE [LARGE SCALE GENOMIC DNA]</scope>
    <source>
        <strain>ATCC VR-902B / DSM 19102 / 434/Bu</strain>
    </source>
</reference>
<protein>
    <recommendedName>
        <fullName evidence="1">Large ribosomal subunit protein bL21</fullName>
    </recommendedName>
    <alternativeName>
        <fullName evidence="2">50S ribosomal protein L21</fullName>
    </alternativeName>
</protein>
<comment type="function">
    <text evidence="1">This protein binds to 23S rRNA in the presence of protein L20.</text>
</comment>
<comment type="subunit">
    <text evidence="1">Part of the 50S ribosomal subunit. Contacts protein L20.</text>
</comment>
<comment type="similarity">
    <text evidence="1">Belongs to the bacterial ribosomal protein bL21 family.</text>
</comment>
<dbReference type="EMBL" id="AM884176">
    <property type="protein sequence ID" value="CAP04116.1"/>
    <property type="molecule type" value="Genomic_DNA"/>
</dbReference>
<dbReference type="RefSeq" id="WP_009871772.1">
    <property type="nucleotide sequence ID" value="NC_010287.1"/>
</dbReference>
<dbReference type="RefSeq" id="YP_001654749.1">
    <property type="nucleotide sequence ID" value="NC_010287.1"/>
</dbReference>
<dbReference type="SMR" id="B0B7Z0"/>
<dbReference type="KEGG" id="ctb:CTL0677"/>
<dbReference type="PATRIC" id="fig|471472.4.peg.727"/>
<dbReference type="HOGENOM" id="CLU_061463_3_2_0"/>
<dbReference type="Proteomes" id="UP001154402">
    <property type="component" value="Chromosome"/>
</dbReference>
<dbReference type="GO" id="GO:0005737">
    <property type="term" value="C:cytoplasm"/>
    <property type="evidence" value="ECO:0007669"/>
    <property type="project" value="UniProtKB-ARBA"/>
</dbReference>
<dbReference type="GO" id="GO:1990904">
    <property type="term" value="C:ribonucleoprotein complex"/>
    <property type="evidence" value="ECO:0007669"/>
    <property type="project" value="UniProtKB-KW"/>
</dbReference>
<dbReference type="GO" id="GO:0005840">
    <property type="term" value="C:ribosome"/>
    <property type="evidence" value="ECO:0007669"/>
    <property type="project" value="UniProtKB-KW"/>
</dbReference>
<dbReference type="GO" id="GO:0019843">
    <property type="term" value="F:rRNA binding"/>
    <property type="evidence" value="ECO:0007669"/>
    <property type="project" value="UniProtKB-UniRule"/>
</dbReference>
<dbReference type="GO" id="GO:0003735">
    <property type="term" value="F:structural constituent of ribosome"/>
    <property type="evidence" value="ECO:0007669"/>
    <property type="project" value="InterPro"/>
</dbReference>
<dbReference type="GO" id="GO:0006412">
    <property type="term" value="P:translation"/>
    <property type="evidence" value="ECO:0007669"/>
    <property type="project" value="UniProtKB-UniRule"/>
</dbReference>
<dbReference type="HAMAP" id="MF_01363">
    <property type="entry name" value="Ribosomal_bL21"/>
    <property type="match status" value="1"/>
</dbReference>
<dbReference type="InterPro" id="IPR028909">
    <property type="entry name" value="bL21-like"/>
</dbReference>
<dbReference type="InterPro" id="IPR036164">
    <property type="entry name" value="bL21-like_sf"/>
</dbReference>
<dbReference type="InterPro" id="IPR001787">
    <property type="entry name" value="Ribosomal_bL21"/>
</dbReference>
<dbReference type="InterPro" id="IPR018258">
    <property type="entry name" value="Ribosomal_bL21_CS"/>
</dbReference>
<dbReference type="NCBIfam" id="TIGR00061">
    <property type="entry name" value="L21"/>
    <property type="match status" value="1"/>
</dbReference>
<dbReference type="PANTHER" id="PTHR21349">
    <property type="entry name" value="50S RIBOSOMAL PROTEIN L21"/>
    <property type="match status" value="1"/>
</dbReference>
<dbReference type="PANTHER" id="PTHR21349:SF0">
    <property type="entry name" value="LARGE RIBOSOMAL SUBUNIT PROTEIN BL21M"/>
    <property type="match status" value="1"/>
</dbReference>
<dbReference type="Pfam" id="PF00829">
    <property type="entry name" value="Ribosomal_L21p"/>
    <property type="match status" value="1"/>
</dbReference>
<dbReference type="SUPFAM" id="SSF141091">
    <property type="entry name" value="L21p-like"/>
    <property type="match status" value="1"/>
</dbReference>
<dbReference type="PROSITE" id="PS01169">
    <property type="entry name" value="RIBOSOMAL_L21"/>
    <property type="match status" value="1"/>
</dbReference>
<proteinExistence type="inferred from homology"/>
<name>RL21_CHLT2</name>
<gene>
    <name evidence="1" type="primary">rplU</name>
    <name type="ordered locus">CTL0677</name>
</gene>
<accession>B0B7Z0</accession>